<accession>P78712</accession>
<accession>Q7RV67</accession>
<accession>Q9P6D0</accession>
<protein>
    <recommendedName>
        <fullName>Actin-related protein 3</fullName>
    </recommendedName>
    <alternativeName>
        <fullName>Actin-like protein 3</fullName>
    </alternativeName>
</protein>
<name>ARP3_NEUCR</name>
<evidence type="ECO:0000250" key="1"/>
<evidence type="ECO:0000256" key="2">
    <source>
        <dbReference type="SAM" id="MobiDB-lite"/>
    </source>
</evidence>
<evidence type="ECO:0000305" key="3"/>
<sequence>MANTTPAVVMDNGTGFSKLGFAGNDSPSFVFPTAIATKSPSAGTGGSGSGRPAVANKPSFLTGGAGPGGHLSAKRGTEDLDYFIGDEAVAAANGPGYGLHYPIRHGQIENWDHMERFWSNSIFKYLRVEPEDHHFLLTEPPLNPPENRENTAEIFFESFNCAGLYIAVQAVLALAASWTSSKVQDRSLTGTVIDSGDGVTHVIPVAEGYVIGSSIKSIPIAGRDITYFVQSLLRDRGEPDSSLKTAQEIKEEYCYVCPDIVKEFAKYDRDRSRFLKHTITQPGGRQVTVDVGYERFMAPEIFFNPEIYSSDFLTPLPVVVDGVIQSSPIDVRRGLYKNIVLSGGSTLYKDFGRRLQRDIKQLVDTRIKASEVRSGGAKSGGLDVQVITHKRQRHGPWFGGSLLGQTPEFRSYCHTKAEYQEYGPSIVRRFALLGGPGGS</sequence>
<organism>
    <name type="scientific">Neurospora crassa (strain ATCC 24698 / 74-OR23-1A / CBS 708.71 / DSM 1257 / FGSC 987)</name>
    <dbReference type="NCBI Taxonomy" id="367110"/>
    <lineage>
        <taxon>Eukaryota</taxon>
        <taxon>Fungi</taxon>
        <taxon>Dikarya</taxon>
        <taxon>Ascomycota</taxon>
        <taxon>Pezizomycotina</taxon>
        <taxon>Sordariomycetes</taxon>
        <taxon>Sordariomycetidae</taxon>
        <taxon>Sordariales</taxon>
        <taxon>Sordariaceae</taxon>
        <taxon>Neurospora</taxon>
    </lineage>
</organism>
<proteinExistence type="evidence at transcript level"/>
<comment type="function">
    <text evidence="1">Functions as ATP-binding component of the Arp2/3 complex which is involved in regulation of actin polymerization and together with an activating nucleation-promoting factor (NPF) mediates the formation of branched actin networks. Seems to contact the pointed end of the daughter actin filament (By similarity).</text>
</comment>
<comment type="subunit">
    <text evidence="1">Component of the Arp2/3 complex composed.</text>
</comment>
<comment type="subcellular location">
    <subcellularLocation>
        <location evidence="1">Cytoplasm</location>
        <location evidence="1">Cytoskeleton</location>
    </subcellularLocation>
</comment>
<comment type="similarity">
    <text evidence="3">Belongs to the actin family. ARP3 subfamily.</text>
</comment>
<reference key="1">
    <citation type="journal article" date="1998" name="Mol. Gen. Genet.">
        <title>Analysis of actin and actin-related protein 3 (ARP3) gene expression following induction of hyphal tip formation and apolar growth in Neurospora.</title>
        <authorList>
            <person name="Tinsley J.H."/>
            <person name="Lee I.H."/>
            <person name="Minke P.F."/>
            <person name="Plamann M."/>
        </authorList>
    </citation>
    <scope>NUCLEOTIDE SEQUENCE [MRNA]</scope>
</reference>
<reference key="2">
    <citation type="journal article" date="2003" name="Nucleic Acids Res.">
        <title>What's in the genome of a filamentous fungus? Analysis of the Neurospora genome sequence.</title>
        <authorList>
            <person name="Mannhaupt G."/>
            <person name="Montrone C."/>
            <person name="Haase D."/>
            <person name="Mewes H.-W."/>
            <person name="Aign V."/>
            <person name="Hoheisel J.D."/>
            <person name="Fartmann B."/>
            <person name="Nyakatura G."/>
            <person name="Kempken F."/>
            <person name="Maier J."/>
            <person name="Schulte U."/>
        </authorList>
    </citation>
    <scope>NUCLEOTIDE SEQUENCE [LARGE SCALE GENOMIC DNA]</scope>
    <source>
        <strain>ATCC 24698 / 74-OR23-1A / CBS 708.71 / DSM 1257 / FGSC 987</strain>
    </source>
</reference>
<reference key="3">
    <citation type="journal article" date="2003" name="Nature">
        <title>The genome sequence of the filamentous fungus Neurospora crassa.</title>
        <authorList>
            <person name="Galagan J.E."/>
            <person name="Calvo S.E."/>
            <person name="Borkovich K.A."/>
            <person name="Selker E.U."/>
            <person name="Read N.D."/>
            <person name="Jaffe D.B."/>
            <person name="FitzHugh W."/>
            <person name="Ma L.-J."/>
            <person name="Smirnov S."/>
            <person name="Purcell S."/>
            <person name="Rehman B."/>
            <person name="Elkins T."/>
            <person name="Engels R."/>
            <person name="Wang S."/>
            <person name="Nielsen C.B."/>
            <person name="Butler J."/>
            <person name="Endrizzi M."/>
            <person name="Qui D."/>
            <person name="Ianakiev P."/>
            <person name="Bell-Pedersen D."/>
            <person name="Nelson M.A."/>
            <person name="Werner-Washburne M."/>
            <person name="Selitrennikoff C.P."/>
            <person name="Kinsey J.A."/>
            <person name="Braun E.L."/>
            <person name="Zelter A."/>
            <person name="Schulte U."/>
            <person name="Kothe G.O."/>
            <person name="Jedd G."/>
            <person name="Mewes H.-W."/>
            <person name="Staben C."/>
            <person name="Marcotte E."/>
            <person name="Greenberg D."/>
            <person name="Roy A."/>
            <person name="Foley K."/>
            <person name="Naylor J."/>
            <person name="Stange-Thomann N."/>
            <person name="Barrett R."/>
            <person name="Gnerre S."/>
            <person name="Kamal M."/>
            <person name="Kamvysselis M."/>
            <person name="Mauceli E.W."/>
            <person name="Bielke C."/>
            <person name="Rudd S."/>
            <person name="Frishman D."/>
            <person name="Krystofova S."/>
            <person name="Rasmussen C."/>
            <person name="Metzenberg R.L."/>
            <person name="Perkins D.D."/>
            <person name="Kroken S."/>
            <person name="Cogoni C."/>
            <person name="Macino G."/>
            <person name="Catcheside D.E.A."/>
            <person name="Li W."/>
            <person name="Pratt R.J."/>
            <person name="Osmani S.A."/>
            <person name="DeSouza C.P.C."/>
            <person name="Glass N.L."/>
            <person name="Orbach M.J."/>
            <person name="Berglund J.A."/>
            <person name="Voelker R."/>
            <person name="Yarden O."/>
            <person name="Plamann M."/>
            <person name="Seiler S."/>
            <person name="Dunlap J.C."/>
            <person name="Radford A."/>
            <person name="Aramayo R."/>
            <person name="Natvig D.O."/>
            <person name="Alex L.A."/>
            <person name="Mannhaupt G."/>
            <person name="Ebbole D.J."/>
            <person name="Freitag M."/>
            <person name="Paulsen I."/>
            <person name="Sachs M.S."/>
            <person name="Lander E.S."/>
            <person name="Nusbaum C."/>
            <person name="Birren B.W."/>
        </authorList>
    </citation>
    <scope>NUCLEOTIDE SEQUENCE [LARGE SCALE GENOMIC DNA]</scope>
    <source>
        <strain>ATCC 24698 / 74-OR23-1A / CBS 708.71 / DSM 1257 / FGSC 987</strain>
    </source>
</reference>
<gene>
    <name type="primary">arp-3</name>
    <name type="synonym">arp3</name>
    <name type="ORF">B17C10.190</name>
    <name type="ORF">NCU01756</name>
</gene>
<feature type="chain" id="PRO_0000089089" description="Actin-related protein 3">
    <location>
        <begin position="1"/>
        <end position="439"/>
    </location>
</feature>
<feature type="region of interest" description="Disordered" evidence="2">
    <location>
        <begin position="40"/>
        <end position="71"/>
    </location>
</feature>
<feature type="sequence conflict" description="In Ref. 1; AAC78497." evidence="3" ref="1">
    <original>A</original>
    <variation>T</variation>
    <location>
        <position position="7"/>
    </location>
</feature>
<keyword id="KW-0009">Actin-binding</keyword>
<keyword id="KW-0067">ATP-binding</keyword>
<keyword id="KW-0963">Cytoplasm</keyword>
<keyword id="KW-0206">Cytoskeleton</keyword>
<keyword id="KW-0547">Nucleotide-binding</keyword>
<keyword id="KW-1185">Reference proteome</keyword>
<dbReference type="EMBL" id="U79737">
    <property type="protein sequence ID" value="AAC78497.1"/>
    <property type="molecule type" value="mRNA"/>
</dbReference>
<dbReference type="EMBL" id="AL355926">
    <property type="protein sequence ID" value="CAB91239.1"/>
    <property type="molecule type" value="Genomic_DNA"/>
</dbReference>
<dbReference type="EMBL" id="CM002237">
    <property type="protein sequence ID" value="EAA27943.2"/>
    <property type="molecule type" value="Genomic_DNA"/>
</dbReference>
<dbReference type="PIR" id="T49438">
    <property type="entry name" value="T49438"/>
</dbReference>
<dbReference type="RefSeq" id="XP_957179.2">
    <property type="nucleotide sequence ID" value="XM_952086.3"/>
</dbReference>
<dbReference type="SMR" id="P78712"/>
<dbReference type="FunCoup" id="P78712">
    <property type="interactions" value="714"/>
</dbReference>
<dbReference type="STRING" id="367110.P78712"/>
<dbReference type="PaxDb" id="5141-EFNCRP00000001861"/>
<dbReference type="EnsemblFungi" id="EAA27943">
    <property type="protein sequence ID" value="EAA27943"/>
    <property type="gene ID" value="NCU01756"/>
</dbReference>
<dbReference type="GeneID" id="3873331"/>
<dbReference type="KEGG" id="ncr:NCU01756"/>
<dbReference type="VEuPathDB" id="FungiDB:NCU01756"/>
<dbReference type="HOGENOM" id="CLU_027965_3_0_1"/>
<dbReference type="InParanoid" id="P78712"/>
<dbReference type="OrthoDB" id="421448at2759"/>
<dbReference type="Proteomes" id="UP000001805">
    <property type="component" value="Chromosome 6, Linkage Group II"/>
</dbReference>
<dbReference type="GO" id="GO:0030479">
    <property type="term" value="C:actin cortical patch"/>
    <property type="evidence" value="ECO:0000318"/>
    <property type="project" value="GO_Central"/>
</dbReference>
<dbReference type="GO" id="GO:0005885">
    <property type="term" value="C:Arp2/3 protein complex"/>
    <property type="evidence" value="ECO:0000318"/>
    <property type="project" value="GO_Central"/>
</dbReference>
<dbReference type="GO" id="GO:0051285">
    <property type="term" value="C:cell cortex of cell tip"/>
    <property type="evidence" value="ECO:0007669"/>
    <property type="project" value="EnsemblFungi"/>
</dbReference>
<dbReference type="GO" id="GO:0032153">
    <property type="term" value="C:cell division site"/>
    <property type="evidence" value="ECO:0007669"/>
    <property type="project" value="EnsemblFungi"/>
</dbReference>
<dbReference type="GO" id="GO:0051015">
    <property type="term" value="F:actin filament binding"/>
    <property type="evidence" value="ECO:0007669"/>
    <property type="project" value="EnsemblFungi"/>
</dbReference>
<dbReference type="GO" id="GO:0005524">
    <property type="term" value="F:ATP binding"/>
    <property type="evidence" value="ECO:0007669"/>
    <property type="project" value="UniProtKB-KW"/>
</dbReference>
<dbReference type="GO" id="GO:0044396">
    <property type="term" value="P:actin cortical patch organization"/>
    <property type="evidence" value="ECO:0007669"/>
    <property type="project" value="EnsemblFungi"/>
</dbReference>
<dbReference type="GO" id="GO:0030041">
    <property type="term" value="P:actin filament polymerization"/>
    <property type="evidence" value="ECO:0007669"/>
    <property type="project" value="EnsemblFungi"/>
</dbReference>
<dbReference type="GO" id="GO:0034314">
    <property type="term" value="P:Arp2/3 complex-mediated actin nucleation"/>
    <property type="evidence" value="ECO:0000318"/>
    <property type="project" value="GO_Central"/>
</dbReference>
<dbReference type="CDD" id="cd10221">
    <property type="entry name" value="ASKHA_NBD_Arp3-like"/>
    <property type="match status" value="1"/>
</dbReference>
<dbReference type="FunFam" id="3.30.420.40:FF:000029">
    <property type="entry name" value="Actin-related protein 3"/>
    <property type="match status" value="1"/>
</dbReference>
<dbReference type="FunFam" id="3.90.640.10:FF:000006">
    <property type="entry name" value="Actin-related protein 3 (ARP3)"/>
    <property type="match status" value="1"/>
</dbReference>
<dbReference type="FunFam" id="3.30.420.40:FF:000058">
    <property type="entry name" value="Putative actin-related protein 5"/>
    <property type="match status" value="1"/>
</dbReference>
<dbReference type="Gene3D" id="3.30.420.40">
    <property type="match status" value="2"/>
</dbReference>
<dbReference type="Gene3D" id="3.90.640.10">
    <property type="entry name" value="Actin, Chain A, domain 4"/>
    <property type="match status" value="1"/>
</dbReference>
<dbReference type="InterPro" id="IPR004000">
    <property type="entry name" value="Actin"/>
</dbReference>
<dbReference type="InterPro" id="IPR020902">
    <property type="entry name" value="Actin/actin-like_CS"/>
</dbReference>
<dbReference type="InterPro" id="IPR043129">
    <property type="entry name" value="ATPase_NBD"/>
</dbReference>
<dbReference type="PANTHER" id="PTHR11937">
    <property type="entry name" value="ACTIN"/>
    <property type="match status" value="1"/>
</dbReference>
<dbReference type="Pfam" id="PF00022">
    <property type="entry name" value="Actin"/>
    <property type="match status" value="2"/>
</dbReference>
<dbReference type="SMART" id="SM00268">
    <property type="entry name" value="ACTIN"/>
    <property type="match status" value="1"/>
</dbReference>
<dbReference type="SUPFAM" id="SSF53067">
    <property type="entry name" value="Actin-like ATPase domain"/>
    <property type="match status" value="2"/>
</dbReference>
<dbReference type="PROSITE" id="PS01132">
    <property type="entry name" value="ACTINS_ACT_LIKE"/>
    <property type="match status" value="1"/>
</dbReference>